<organism>
    <name type="scientific">Escherichia coli (strain K12)</name>
    <dbReference type="NCBI Taxonomy" id="83333"/>
    <lineage>
        <taxon>Bacteria</taxon>
        <taxon>Pseudomonadati</taxon>
        <taxon>Pseudomonadota</taxon>
        <taxon>Gammaproteobacteria</taxon>
        <taxon>Enterobacterales</taxon>
        <taxon>Enterobacteriaceae</taxon>
        <taxon>Escherichia</taxon>
    </lineage>
</organism>
<accession>P00805</accession>
<accession>Q2M9N6</accession>
<comment type="catalytic activity">
    <reaction evidence="9">
        <text>L-asparagine + H2O = L-aspartate + NH4(+)</text>
        <dbReference type="Rhea" id="RHEA:21016"/>
        <dbReference type="ChEBI" id="CHEBI:15377"/>
        <dbReference type="ChEBI" id="CHEBI:28938"/>
        <dbReference type="ChEBI" id="CHEBI:29991"/>
        <dbReference type="ChEBI" id="CHEBI:58048"/>
        <dbReference type="EC" id="3.5.1.1"/>
    </reaction>
</comment>
<comment type="biophysicochemical properties">
    <kinetics>
        <KM>0.115 uM for L-asparagine</KM>
    </kinetics>
</comment>
<comment type="subunit">
    <text evidence="4 5 6 8 9">Homotetramer.</text>
</comment>
<comment type="interaction">
    <interactant intactId="EBI-907458">
        <id>P00805</id>
    </interactant>
    <interactant intactId="EBI-907458">
        <id>P00805</id>
        <label>ansB</label>
    </interactant>
    <organismsDiffer>false</organismsDiffer>
    <experiments>2</experiments>
</comment>
<comment type="subcellular location">
    <subcellularLocation>
        <location>Periplasm</location>
    </subcellularLocation>
</comment>
<comment type="induction">
    <text>By cAMP and anaerobiosis.</text>
</comment>
<comment type="pharmaceutical">
    <text>Available under the names Crastinin (Bayer), Elspar (Merck), Kidrolase (Rhone-Poulenc) and Leunase (Kyowa). Also available as a PEG-conjugated form (Pegaspargase) under the name Oncaspar (Enzon). Used as an antineoplastic in chemotherapy. Reduces the quantity of asparagine available to cancer cells.</text>
</comment>
<comment type="miscellaneous">
    <text>E.coli contains two L-asparaginase isoenzymes: L-asparaginase I, a low-affinity enzyme located in the cytoplasm, and L-asparaginase II, a high-affinity secreted enzyme.</text>
</comment>
<comment type="similarity">
    <text evidence="10">Belongs to the asparaginase 1 family.</text>
</comment>
<gene>
    <name type="primary">ansB</name>
    <name type="ordered locus">b2957</name>
    <name type="ordered locus">JW2924</name>
</gene>
<name>ASPG2_ECOLI</name>
<proteinExistence type="evidence at protein level"/>
<protein>
    <recommendedName>
        <fullName>L-asparaginase 2</fullName>
        <ecNumber>3.5.1.1</ecNumber>
    </recommendedName>
    <alternativeName>
        <fullName>L-asparaginase II</fullName>
        <shortName>L-ASNase II</shortName>
    </alternativeName>
    <alternativeName>
        <fullName>L-asparagine amidohydrolase II</fullName>
    </alternativeName>
    <innName>Colaspase</innName>
</protein>
<keyword id="KW-0002">3D-structure</keyword>
<keyword id="KW-0903">Direct protein sequencing</keyword>
<keyword id="KW-1015">Disulfide bond</keyword>
<keyword id="KW-0378">Hydrolase</keyword>
<keyword id="KW-0574">Periplasm</keyword>
<keyword id="KW-0582">Pharmaceutical</keyword>
<keyword id="KW-1185">Reference proteome</keyword>
<keyword id="KW-0732">Signal</keyword>
<sequence length="348" mass="36851">MEFFKKTALAALVMGFSGAALALPNITILATGGTIAGGGDSATKSNYTVGKVGVENLVNAVPQLKDIANVKGEQVVNIGSQDMNDNVWLTLAKKINTDCDKTDGFVITHGTDTMEETAYFLDLTVKCDKPVVMVGAMRPSTSMSADGPFNLYNAVVTAADKASANRGVLVVMNDTVLDGRDVTKTNTTDVATFKSVNYGPLGYIHNGKIDYQRTPARKHTSDTPFDVSKLNELPKVGIVYNYANASDLPAKALVDAGYDGIVSAGVGNGNLYKSVFDTLATAAKTGTAVVRSSRVPTGATTQDAEVDDAKYGFVASGTLNPQKARVLLQLALTQTKDPQQIQQIFNQY</sequence>
<dbReference type="EC" id="3.5.1.1"/>
<dbReference type="EMBL" id="M34277">
    <property type="protein sequence ID" value="AAA24062.1"/>
    <property type="molecule type" value="Genomic_DNA"/>
</dbReference>
<dbReference type="EMBL" id="M34234">
    <property type="protein sequence ID" value="AAA23445.1"/>
    <property type="molecule type" value="Genomic_DNA"/>
</dbReference>
<dbReference type="EMBL" id="U28377">
    <property type="protein sequence ID" value="AAA69124.1"/>
    <property type="molecule type" value="Genomic_DNA"/>
</dbReference>
<dbReference type="EMBL" id="U00096">
    <property type="protein sequence ID" value="AAC75994.1"/>
    <property type="molecule type" value="Genomic_DNA"/>
</dbReference>
<dbReference type="EMBL" id="AP009048">
    <property type="protein sequence ID" value="BAE77020.1"/>
    <property type="molecule type" value="Genomic_DNA"/>
</dbReference>
<dbReference type="PIR" id="A35132">
    <property type="entry name" value="XDEC"/>
</dbReference>
<dbReference type="RefSeq" id="NP_417432.1">
    <property type="nucleotide sequence ID" value="NC_000913.3"/>
</dbReference>
<dbReference type="RefSeq" id="WP_000394140.1">
    <property type="nucleotide sequence ID" value="NZ_LN832404.1"/>
</dbReference>
<dbReference type="PDB" id="1HO3">
    <property type="method" value="X-ray"/>
    <property type="resolution" value="2.50 A"/>
    <property type="chains" value="A/B=23-348"/>
</dbReference>
<dbReference type="PDB" id="1IHD">
    <property type="method" value="X-ray"/>
    <property type="resolution" value="2.65 A"/>
    <property type="chains" value="A/C=23-348"/>
</dbReference>
<dbReference type="PDB" id="1JAZ">
    <property type="method" value="X-ray"/>
    <property type="resolution" value="2.27 A"/>
    <property type="chains" value="A/B=23-348"/>
</dbReference>
<dbReference type="PDB" id="1JJA">
    <property type="method" value="X-ray"/>
    <property type="resolution" value="2.30 A"/>
    <property type="chains" value="A/B/C/D/E/F=23-348"/>
</dbReference>
<dbReference type="PDB" id="1NNS">
    <property type="method" value="X-ray"/>
    <property type="resolution" value="1.95 A"/>
    <property type="chains" value="A/B=23-348"/>
</dbReference>
<dbReference type="PDB" id="3ECA">
    <property type="method" value="X-ray"/>
    <property type="resolution" value="2.40 A"/>
    <property type="chains" value="A/B/C/D=23-348"/>
</dbReference>
<dbReference type="PDB" id="4ECA">
    <property type="method" value="X-ray"/>
    <property type="resolution" value="2.20 A"/>
    <property type="chains" value="A/B/C/D=23-348"/>
</dbReference>
<dbReference type="PDB" id="5MQ5">
    <property type="method" value="X-ray"/>
    <property type="resolution" value="1.60 A"/>
    <property type="chains" value="A/B/C/D=23-348"/>
</dbReference>
<dbReference type="PDB" id="6EOK">
    <property type="method" value="X-ray"/>
    <property type="resolution" value="2.50 A"/>
    <property type="chains" value="A/B/C/D=23-348"/>
</dbReference>
<dbReference type="PDB" id="6NX6">
    <property type="method" value="X-ray"/>
    <property type="resolution" value="2.15 A"/>
    <property type="chains" value="A/B=23-348"/>
</dbReference>
<dbReference type="PDB" id="6NX7">
    <property type="method" value="X-ray"/>
    <property type="resolution" value="2.15 A"/>
    <property type="chains" value="A/B=23-348"/>
</dbReference>
<dbReference type="PDB" id="6NX8">
    <property type="method" value="X-ray"/>
    <property type="resolution" value="1.85 A"/>
    <property type="chains" value="A/B=23-348"/>
</dbReference>
<dbReference type="PDB" id="6NX9">
    <property type="method" value="X-ray"/>
    <property type="resolution" value="1.97 A"/>
    <property type="chains" value="A/B/C/D=23-348"/>
</dbReference>
<dbReference type="PDB" id="6NXA">
    <property type="method" value="X-ray"/>
    <property type="resolution" value="1.93 A"/>
    <property type="chains" value="A/B/C/D=23-348"/>
</dbReference>
<dbReference type="PDB" id="6NXB">
    <property type="method" value="X-ray"/>
    <property type="resolution" value="1.75 A"/>
    <property type="chains" value="A/B/C/D=23-348"/>
</dbReference>
<dbReference type="PDB" id="6PA2">
    <property type="method" value="X-ray"/>
    <property type="resolution" value="1.90 A"/>
    <property type="chains" value="A/B/C/D=23-348"/>
</dbReference>
<dbReference type="PDB" id="6PA3">
    <property type="method" value="X-ray"/>
    <property type="resolution" value="1.65 A"/>
    <property type="chains" value="A/B/C/D=23-348"/>
</dbReference>
<dbReference type="PDB" id="6PA4">
    <property type="method" value="X-ray"/>
    <property type="resolution" value="1.85 A"/>
    <property type="chains" value="A/B/C/D=23-348"/>
</dbReference>
<dbReference type="PDB" id="6PA5">
    <property type="method" value="X-ray"/>
    <property type="resolution" value="2.00 A"/>
    <property type="chains" value="A/B/C/D/E/F/G/H=23-348"/>
</dbReference>
<dbReference type="PDB" id="6PA6">
    <property type="method" value="X-ray"/>
    <property type="resolution" value="2.12 A"/>
    <property type="chains" value="A/B/C/D=23-348"/>
</dbReference>
<dbReference type="PDB" id="6PA8">
    <property type="method" value="X-ray"/>
    <property type="resolution" value="1.90 A"/>
    <property type="chains" value="A/B/C/D=23-348"/>
</dbReference>
<dbReference type="PDB" id="6PA9">
    <property type="method" value="X-ray"/>
    <property type="resolution" value="1.88 A"/>
    <property type="chains" value="A/B=23-348"/>
</dbReference>
<dbReference type="PDB" id="6PAA">
    <property type="method" value="X-ray"/>
    <property type="resolution" value="1.85 A"/>
    <property type="chains" value="A/B/C/D=23-348"/>
</dbReference>
<dbReference type="PDB" id="6PAB">
    <property type="method" value="X-ray"/>
    <property type="resolution" value="1.73 A"/>
    <property type="chains" value="A/B/C/D=23-348"/>
</dbReference>
<dbReference type="PDB" id="6PAC">
    <property type="method" value="X-ray"/>
    <property type="resolution" value="1.60 A"/>
    <property type="chains" value="A/B/C/D=23-348"/>
</dbReference>
<dbReference type="PDB" id="6UOD">
    <property type="method" value="X-ray"/>
    <property type="resolution" value="2.40 A"/>
    <property type="chains" value="A/B/C/D=23-348"/>
</dbReference>
<dbReference type="PDB" id="6UOG">
    <property type="method" value="X-ray"/>
    <property type="resolution" value="2.29 A"/>
    <property type="chains" value="A/B/C/D/E/F/G/H=23-348"/>
</dbReference>
<dbReference type="PDB" id="6UOH">
    <property type="method" value="X-ray"/>
    <property type="resolution" value="2.10 A"/>
    <property type="chains" value="A/B=23-348"/>
</dbReference>
<dbReference type="PDB" id="6V23">
    <property type="method" value="X-ray"/>
    <property type="resolution" value="1.75 A"/>
    <property type="chains" value="A=23-348"/>
</dbReference>
<dbReference type="PDB" id="6V24">
    <property type="method" value="X-ray"/>
    <property type="resolution" value="1.90 A"/>
    <property type="chains" value="A/B/C/D=23-348"/>
</dbReference>
<dbReference type="PDB" id="6V25">
    <property type="method" value="X-ray"/>
    <property type="resolution" value="1.78 A"/>
    <property type="chains" value="A/B/C/D=23-348"/>
</dbReference>
<dbReference type="PDB" id="6V26">
    <property type="method" value="X-ray"/>
    <property type="resolution" value="1.80 A"/>
    <property type="chains" value="A/B/C/D=23-348"/>
</dbReference>
<dbReference type="PDB" id="6V27">
    <property type="method" value="X-ray"/>
    <property type="resolution" value="2.30 A"/>
    <property type="chains" value="A/B/C/D=23-348"/>
</dbReference>
<dbReference type="PDB" id="6V28">
    <property type="method" value="X-ray"/>
    <property type="resolution" value="1.95 A"/>
    <property type="chains" value="A/B/C/D=23-348"/>
</dbReference>
<dbReference type="PDB" id="6V29">
    <property type="method" value="X-ray"/>
    <property type="resolution" value="2.00 A"/>
    <property type="chains" value="A/B/C/D=23-348"/>
</dbReference>
<dbReference type="PDB" id="6V2A">
    <property type="method" value="X-ray"/>
    <property type="resolution" value="2.00 A"/>
    <property type="chains" value="A/B/C/D=23-348"/>
</dbReference>
<dbReference type="PDB" id="6V2B">
    <property type="method" value="X-ray"/>
    <property type="resolution" value="2.05 A"/>
    <property type="chains" value="A/B/C/D=23-348"/>
</dbReference>
<dbReference type="PDB" id="6V2C">
    <property type="method" value="X-ray"/>
    <property type="resolution" value="2.00 A"/>
    <property type="chains" value="A/B/C/D=23-348"/>
</dbReference>
<dbReference type="PDB" id="6V2G">
    <property type="method" value="X-ray"/>
    <property type="resolution" value="1.90 A"/>
    <property type="chains" value="A/B/C/D=23-348"/>
</dbReference>
<dbReference type="PDB" id="6V5F">
    <property type="method" value="X-ray"/>
    <property type="resolution" value="2.10 A"/>
    <property type="chains" value="A/B/C/D=23-348"/>
</dbReference>
<dbReference type="PDB" id="7A0U">
    <property type="method" value="X-ray"/>
    <property type="resolution" value="2.26 A"/>
    <property type="chains" value="A/B/C/D=23-348"/>
</dbReference>
<dbReference type="PDB" id="7M11">
    <property type="method" value="X-ray"/>
    <property type="resolution" value="1.83 A"/>
    <property type="chains" value="A/B/C/D=23-348"/>
</dbReference>
<dbReference type="PDB" id="7P9C">
    <property type="method" value="X-ray"/>
    <property type="resolution" value="1.60 A"/>
    <property type="chains" value="A/B/C/D=23-348"/>
</dbReference>
<dbReference type="PDB" id="7R57">
    <property type="method" value="X-ray"/>
    <property type="resolution" value="1.40 A"/>
    <property type="chains" value="A/B/C/D=23-348"/>
</dbReference>
<dbReference type="PDB" id="7R5Q">
    <property type="method" value="X-ray"/>
    <property type="resolution" value="1.90 A"/>
    <property type="chains" value="A/B/C/D=23-348"/>
</dbReference>
<dbReference type="PDB" id="8ECD">
    <property type="method" value="X-ray"/>
    <property type="resolution" value="1.62 A"/>
    <property type="chains" value="A/B/C/D=23-348"/>
</dbReference>
<dbReference type="PDB" id="8ECE">
    <property type="method" value="X-ray"/>
    <property type="resolution" value="1.86 A"/>
    <property type="chains" value="A/B/C/D=23-348"/>
</dbReference>
<dbReference type="PDBsum" id="1HO3"/>
<dbReference type="PDBsum" id="1IHD"/>
<dbReference type="PDBsum" id="1JAZ"/>
<dbReference type="PDBsum" id="1JJA"/>
<dbReference type="PDBsum" id="1NNS"/>
<dbReference type="PDBsum" id="3ECA"/>
<dbReference type="PDBsum" id="4ECA"/>
<dbReference type="PDBsum" id="5MQ5"/>
<dbReference type="PDBsum" id="6EOK"/>
<dbReference type="PDBsum" id="6NX6"/>
<dbReference type="PDBsum" id="6NX7"/>
<dbReference type="PDBsum" id="6NX8"/>
<dbReference type="PDBsum" id="6NX9"/>
<dbReference type="PDBsum" id="6NXA"/>
<dbReference type="PDBsum" id="6NXB"/>
<dbReference type="PDBsum" id="6PA2"/>
<dbReference type="PDBsum" id="6PA3"/>
<dbReference type="PDBsum" id="6PA4"/>
<dbReference type="PDBsum" id="6PA5"/>
<dbReference type="PDBsum" id="6PA6"/>
<dbReference type="PDBsum" id="6PA8"/>
<dbReference type="PDBsum" id="6PA9"/>
<dbReference type="PDBsum" id="6PAA"/>
<dbReference type="PDBsum" id="6PAB"/>
<dbReference type="PDBsum" id="6PAC"/>
<dbReference type="PDBsum" id="6UOD"/>
<dbReference type="PDBsum" id="6UOG"/>
<dbReference type="PDBsum" id="6UOH"/>
<dbReference type="PDBsum" id="6V23"/>
<dbReference type="PDBsum" id="6V24"/>
<dbReference type="PDBsum" id="6V25"/>
<dbReference type="PDBsum" id="6V26"/>
<dbReference type="PDBsum" id="6V27"/>
<dbReference type="PDBsum" id="6V28"/>
<dbReference type="PDBsum" id="6V29"/>
<dbReference type="PDBsum" id="6V2A"/>
<dbReference type="PDBsum" id="6V2B"/>
<dbReference type="PDBsum" id="6V2C"/>
<dbReference type="PDBsum" id="6V2G"/>
<dbReference type="PDBsum" id="6V5F"/>
<dbReference type="PDBsum" id="7A0U"/>
<dbReference type="PDBsum" id="7M11"/>
<dbReference type="PDBsum" id="7P9C"/>
<dbReference type="PDBsum" id="7R57"/>
<dbReference type="PDBsum" id="7R5Q"/>
<dbReference type="PDBsum" id="8ECD"/>
<dbReference type="PDBsum" id="8ECE"/>
<dbReference type="SMR" id="P00805"/>
<dbReference type="BioGRID" id="4259243">
    <property type="interactions" value="271"/>
</dbReference>
<dbReference type="BioGRID" id="851774">
    <property type="interactions" value="4"/>
</dbReference>
<dbReference type="DIP" id="DIP-9110N"/>
<dbReference type="FunCoup" id="P00805">
    <property type="interactions" value="203"/>
</dbReference>
<dbReference type="IntAct" id="P00805">
    <property type="interactions" value="8"/>
</dbReference>
<dbReference type="MINT" id="P00805"/>
<dbReference type="STRING" id="511145.b2957"/>
<dbReference type="DrugBank" id="DB01817">
    <property type="generic name" value="Threonine-Aspartic Ester"/>
</dbReference>
<dbReference type="Allergome" id="8365">
    <property type="allergen name" value="Esc c Asparaginase"/>
</dbReference>
<dbReference type="MoonProt" id="P00805"/>
<dbReference type="jPOST" id="P00805"/>
<dbReference type="PaxDb" id="511145-b2957"/>
<dbReference type="EnsemblBacteria" id="AAC75994">
    <property type="protein sequence ID" value="AAC75994"/>
    <property type="gene ID" value="b2957"/>
</dbReference>
<dbReference type="GeneID" id="947454"/>
<dbReference type="KEGG" id="ecj:JW2924"/>
<dbReference type="KEGG" id="eco:b2957"/>
<dbReference type="KEGG" id="ecoc:C3026_16180"/>
<dbReference type="PATRIC" id="fig|1411691.4.peg.3775"/>
<dbReference type="EchoBASE" id="EB0044"/>
<dbReference type="eggNOG" id="COG0252">
    <property type="taxonomic scope" value="Bacteria"/>
</dbReference>
<dbReference type="HOGENOM" id="CLU_019134_1_2_6"/>
<dbReference type="InParanoid" id="P00805"/>
<dbReference type="OMA" id="RYYMQPL"/>
<dbReference type="OrthoDB" id="9788068at2"/>
<dbReference type="PhylomeDB" id="P00805"/>
<dbReference type="BioCyc" id="EcoCyc:ANSB-MONOMER"/>
<dbReference type="BioCyc" id="MetaCyc:ANSB-MONOMER"/>
<dbReference type="BRENDA" id="3.5.1.1">
    <property type="organism ID" value="2026"/>
</dbReference>
<dbReference type="SABIO-RK" id="P00805"/>
<dbReference type="EvolutionaryTrace" id="P00805"/>
<dbReference type="PRO" id="PR:P00805"/>
<dbReference type="Proteomes" id="UP000000625">
    <property type="component" value="Chromosome"/>
</dbReference>
<dbReference type="GO" id="GO:0030288">
    <property type="term" value="C:outer membrane-bounded periplasmic space"/>
    <property type="evidence" value="ECO:0000314"/>
    <property type="project" value="EcoCyc"/>
</dbReference>
<dbReference type="GO" id="GO:0042597">
    <property type="term" value="C:periplasmic space"/>
    <property type="evidence" value="ECO:0000318"/>
    <property type="project" value="GO_Central"/>
</dbReference>
<dbReference type="GO" id="GO:0032991">
    <property type="term" value="C:protein-containing complex"/>
    <property type="evidence" value="ECO:0000314"/>
    <property type="project" value="EcoCyc"/>
</dbReference>
<dbReference type="GO" id="GO:0004067">
    <property type="term" value="F:asparaginase activity"/>
    <property type="evidence" value="ECO:0000314"/>
    <property type="project" value="EcoCyc"/>
</dbReference>
<dbReference type="GO" id="GO:0042802">
    <property type="term" value="F:identical protein binding"/>
    <property type="evidence" value="ECO:0000353"/>
    <property type="project" value="IntAct"/>
</dbReference>
<dbReference type="GO" id="GO:0006530">
    <property type="term" value="P:asparagine catabolic process"/>
    <property type="evidence" value="ECO:0000318"/>
    <property type="project" value="GO_Central"/>
</dbReference>
<dbReference type="GO" id="GO:0051289">
    <property type="term" value="P:protein homotetramerization"/>
    <property type="evidence" value="ECO:0000314"/>
    <property type="project" value="EcoCyc"/>
</dbReference>
<dbReference type="CDD" id="cd00411">
    <property type="entry name" value="L-asparaginase_like"/>
    <property type="match status" value="1"/>
</dbReference>
<dbReference type="FunFam" id="3.40.50.1170:FF:000001">
    <property type="entry name" value="L-asparaginase 2"/>
    <property type="match status" value="1"/>
</dbReference>
<dbReference type="FunFam" id="3.40.50.40:FF:000002">
    <property type="entry name" value="L-asparaginase 2"/>
    <property type="match status" value="1"/>
</dbReference>
<dbReference type="Gene3D" id="3.40.50.40">
    <property type="match status" value="1"/>
</dbReference>
<dbReference type="Gene3D" id="3.40.50.1170">
    <property type="entry name" value="L-asparaginase, N-terminal domain"/>
    <property type="match status" value="1"/>
</dbReference>
<dbReference type="InterPro" id="IPR004550">
    <property type="entry name" value="AsnASE_II"/>
</dbReference>
<dbReference type="InterPro" id="IPR036152">
    <property type="entry name" value="Asp/glu_Ase-like_sf"/>
</dbReference>
<dbReference type="InterPro" id="IPR006034">
    <property type="entry name" value="Asparaginase/glutaminase-like"/>
</dbReference>
<dbReference type="InterPro" id="IPR020827">
    <property type="entry name" value="Asparaginase/glutaminase_AS1"/>
</dbReference>
<dbReference type="InterPro" id="IPR027475">
    <property type="entry name" value="Asparaginase/glutaminase_AS2"/>
</dbReference>
<dbReference type="InterPro" id="IPR040919">
    <property type="entry name" value="Asparaginase_C"/>
</dbReference>
<dbReference type="InterPro" id="IPR027473">
    <property type="entry name" value="L-asparaginase_C"/>
</dbReference>
<dbReference type="InterPro" id="IPR027474">
    <property type="entry name" value="L-asparaginase_N"/>
</dbReference>
<dbReference type="InterPro" id="IPR037152">
    <property type="entry name" value="L-asparaginase_N_sf"/>
</dbReference>
<dbReference type="NCBIfam" id="TIGR00520">
    <property type="entry name" value="asnASE_II"/>
    <property type="match status" value="1"/>
</dbReference>
<dbReference type="NCBIfam" id="NF008304">
    <property type="entry name" value="PRK11096.1"/>
    <property type="match status" value="1"/>
</dbReference>
<dbReference type="PANTHER" id="PTHR11707:SF28">
    <property type="entry name" value="60 KDA LYSOPHOSPHOLIPASE"/>
    <property type="match status" value="1"/>
</dbReference>
<dbReference type="PANTHER" id="PTHR11707">
    <property type="entry name" value="L-ASPARAGINASE"/>
    <property type="match status" value="1"/>
</dbReference>
<dbReference type="Pfam" id="PF00710">
    <property type="entry name" value="Asparaginase"/>
    <property type="match status" value="1"/>
</dbReference>
<dbReference type="Pfam" id="PF17763">
    <property type="entry name" value="Asparaginase_C"/>
    <property type="match status" value="1"/>
</dbReference>
<dbReference type="PIRSF" id="PIRSF001220">
    <property type="entry name" value="L-ASNase_gatD"/>
    <property type="match status" value="1"/>
</dbReference>
<dbReference type="PIRSF" id="PIRSF500176">
    <property type="entry name" value="L_ASNase"/>
    <property type="match status" value="1"/>
</dbReference>
<dbReference type="PRINTS" id="PR00139">
    <property type="entry name" value="ASNGLNASE"/>
</dbReference>
<dbReference type="SMART" id="SM00870">
    <property type="entry name" value="Asparaginase"/>
    <property type="match status" value="1"/>
</dbReference>
<dbReference type="SUPFAM" id="SSF53774">
    <property type="entry name" value="Glutaminase/Asparaginase"/>
    <property type="match status" value="1"/>
</dbReference>
<dbReference type="PROSITE" id="PS00144">
    <property type="entry name" value="ASN_GLN_ASE_1"/>
    <property type="match status" value="1"/>
</dbReference>
<dbReference type="PROSITE" id="PS00917">
    <property type="entry name" value="ASN_GLN_ASE_2"/>
    <property type="match status" value="1"/>
</dbReference>
<dbReference type="PROSITE" id="PS51732">
    <property type="entry name" value="ASN_GLN_ASE_3"/>
    <property type="match status" value="1"/>
</dbReference>
<feature type="signal peptide" evidence="7">
    <location>
        <begin position="1"/>
        <end position="22"/>
    </location>
</feature>
<feature type="chain" id="PRO_0000002356" description="L-asparaginase 2">
    <location>
        <begin position="23"/>
        <end position="348"/>
    </location>
</feature>
<feature type="domain" description="Asparaginase/glutaminase" evidence="1">
    <location>
        <begin position="24"/>
        <end position="348"/>
    </location>
</feature>
<feature type="active site" description="O-isoaspartyl threonine intermediate" evidence="2 3 4 5 8 9">
    <location>
        <position position="34"/>
    </location>
</feature>
<feature type="binding site" evidence="4 8 11 12">
    <location>
        <begin position="80"/>
        <end position="81"/>
    </location>
    <ligand>
        <name>substrate</name>
    </ligand>
</feature>
<feature type="binding site" evidence="4 8 11 12">
    <location>
        <begin position="111"/>
        <end position="112"/>
    </location>
    <ligand>
        <name>substrate</name>
    </ligand>
</feature>
<feature type="disulfide bond" evidence="8 9">
    <location>
        <begin position="99"/>
        <end position="127"/>
    </location>
</feature>
<feature type="mutagenesis site" description="Loss of enzyme activity." evidence="5">
    <original>T</original>
    <variation>A</variation>
    <location>
        <position position="34"/>
    </location>
</feature>
<feature type="mutagenesis site" description="Reduced enzyme activity." evidence="9">
    <original>T</original>
    <variation>S</variation>
    <location>
        <position position="111"/>
    </location>
</feature>
<feature type="mutagenesis site" description="Loss of enzyme activity." evidence="9">
    <original>T</original>
    <variation>V</variation>
    <location>
        <position position="111"/>
    </location>
</feature>
<feature type="sequence conflict" description="In Ref. 5; AA sequence." evidence="10" ref="5">
    <original>V</original>
    <variation>A</variation>
    <location>
        <position position="49"/>
    </location>
</feature>
<feature type="sequence conflict" description="In Ref. 5; AA sequence." evidence="10" ref="5">
    <original>N</original>
    <variation>D</variation>
    <location>
        <position position="86"/>
    </location>
</feature>
<feature type="sequence conflict" description="In Ref. 5; AA sequence." evidence="10" ref="5">
    <location>
        <position position="132"/>
    </location>
</feature>
<feature type="sequence conflict" description="In Ref. 5; AA sequence." evidence="10" ref="5">
    <location>
        <position position="156"/>
    </location>
</feature>
<feature type="sequence conflict" description="In Ref. 5; AA sequence." evidence="10" ref="5">
    <location>
        <position position="171"/>
    </location>
</feature>
<feature type="sequence conflict" description="In Ref. 5; AA sequence." evidence="10" ref="5">
    <original>N</original>
    <variation>D</variation>
    <location>
        <position position="206"/>
    </location>
</feature>
<feature type="sequence conflict" description="In Ref. 5; AA sequence." evidence="10" ref="5">
    <original>N</original>
    <variation>D</variation>
    <location>
        <position position="268"/>
    </location>
</feature>
<feature type="sequence conflict" description="In Ref. 5; AA sequence." evidence="10" ref="5">
    <original>S</original>
    <variation>T</variation>
    <location>
        <position position="274"/>
    </location>
</feature>
<feature type="sequence conflict" description="In Ref. 5; AA sequence." evidence="10" ref="5">
    <original>T</original>
    <variation>D</variation>
    <location>
        <position position="285"/>
    </location>
</feature>
<feature type="sequence conflict" description="In Ref. 5; AA sequence." evidence="10" ref="5">
    <location>
        <position position="290"/>
    </location>
</feature>
<feature type="sequence conflict" description="In Ref. 5; AA sequence." evidence="10" ref="5">
    <location>
        <position position="330"/>
    </location>
</feature>
<feature type="strand" evidence="17">
    <location>
        <begin position="25"/>
        <end position="30"/>
    </location>
</feature>
<feature type="helix" evidence="14">
    <location>
        <begin position="34"/>
        <end position="36"/>
    </location>
</feature>
<feature type="strand" evidence="16">
    <location>
        <begin position="38"/>
        <end position="40"/>
    </location>
</feature>
<feature type="strand" evidence="14">
    <location>
        <begin position="42"/>
        <end position="44"/>
    </location>
</feature>
<feature type="strand" evidence="15">
    <location>
        <begin position="48"/>
        <end position="50"/>
    </location>
</feature>
<feature type="helix" evidence="17">
    <location>
        <begin position="54"/>
        <end position="56"/>
    </location>
</feature>
<feature type="helix" evidence="17">
    <location>
        <begin position="57"/>
        <end position="60"/>
    </location>
</feature>
<feature type="helix" evidence="17">
    <location>
        <begin position="62"/>
        <end position="66"/>
    </location>
</feature>
<feature type="strand" evidence="17">
    <location>
        <begin position="69"/>
        <end position="74"/>
    </location>
</feature>
<feature type="helix" evidence="17">
    <location>
        <begin position="80"/>
        <end position="82"/>
    </location>
</feature>
<feature type="helix" evidence="17">
    <location>
        <begin position="85"/>
        <end position="98"/>
    </location>
</feature>
<feature type="helix" evidence="17">
    <location>
        <begin position="99"/>
        <end position="101"/>
    </location>
</feature>
<feature type="strand" evidence="17">
    <location>
        <begin position="103"/>
        <end position="108"/>
    </location>
</feature>
<feature type="strand" evidence="14">
    <location>
        <begin position="111"/>
        <end position="113"/>
    </location>
</feature>
<feature type="helix" evidence="17">
    <location>
        <begin position="114"/>
        <end position="124"/>
    </location>
</feature>
<feature type="strand" evidence="17">
    <location>
        <begin position="131"/>
        <end position="134"/>
    </location>
</feature>
<feature type="helix" evidence="17">
    <location>
        <begin position="147"/>
        <end position="159"/>
    </location>
</feature>
<feature type="helix" evidence="17">
    <location>
        <begin position="161"/>
        <end position="163"/>
    </location>
</feature>
<feature type="strand" evidence="17">
    <location>
        <begin position="168"/>
        <end position="172"/>
    </location>
</feature>
<feature type="strand" evidence="17">
    <location>
        <begin position="175"/>
        <end position="178"/>
    </location>
</feature>
<feature type="turn" evidence="17">
    <location>
        <begin position="179"/>
        <end position="181"/>
    </location>
</feature>
<feature type="strand" evidence="17">
    <location>
        <begin position="182"/>
        <end position="184"/>
    </location>
</feature>
<feature type="strand" evidence="17">
    <location>
        <begin position="186"/>
        <end position="188"/>
    </location>
</feature>
<feature type="strand" evidence="17">
    <location>
        <begin position="193"/>
        <end position="195"/>
    </location>
</feature>
<feature type="turn" evidence="17">
    <location>
        <begin position="196"/>
        <end position="198"/>
    </location>
</feature>
<feature type="strand" evidence="17">
    <location>
        <begin position="201"/>
        <end position="205"/>
    </location>
</feature>
<feature type="strand" evidence="17">
    <location>
        <begin position="208"/>
        <end position="211"/>
    </location>
</feature>
<feature type="helix" evidence="17">
    <location>
        <begin position="220"/>
        <end position="222"/>
    </location>
</feature>
<feature type="strand" evidence="17">
    <location>
        <begin position="236"/>
        <end position="240"/>
    </location>
</feature>
<feature type="helix" evidence="17">
    <location>
        <begin position="248"/>
        <end position="255"/>
    </location>
</feature>
<feature type="strand" evidence="17">
    <location>
        <begin position="259"/>
        <end position="266"/>
    </location>
</feature>
<feature type="turn" evidence="17">
    <location>
        <begin position="267"/>
        <end position="269"/>
    </location>
</feature>
<feature type="helix" evidence="17">
    <location>
        <begin position="273"/>
        <end position="284"/>
    </location>
</feature>
<feature type="strand" evidence="17">
    <location>
        <begin position="288"/>
        <end position="298"/>
    </location>
</feature>
<feature type="strand" evidence="17">
    <location>
        <begin position="302"/>
        <end position="306"/>
    </location>
</feature>
<feature type="helix" evidence="17">
    <location>
        <begin position="308"/>
        <end position="311"/>
    </location>
</feature>
<feature type="strand" evidence="17">
    <location>
        <begin position="313"/>
        <end position="315"/>
    </location>
</feature>
<feature type="helix" evidence="17">
    <location>
        <begin position="321"/>
        <end position="331"/>
    </location>
</feature>
<feature type="turn" evidence="17">
    <location>
        <begin position="332"/>
        <end position="334"/>
    </location>
</feature>
<feature type="helix" evidence="17">
    <location>
        <begin position="338"/>
        <end position="347"/>
    </location>
</feature>
<evidence type="ECO:0000255" key="1">
    <source>
        <dbReference type="PROSITE-ProRule" id="PRU01068"/>
    </source>
</evidence>
<evidence type="ECO:0000255" key="2">
    <source>
        <dbReference type="PROSITE-ProRule" id="PRU10099"/>
    </source>
</evidence>
<evidence type="ECO:0000255" key="3">
    <source>
        <dbReference type="PROSITE-ProRule" id="PRU10100"/>
    </source>
</evidence>
<evidence type="ECO:0000269" key="4">
    <source>
    </source>
</evidence>
<evidence type="ECO:0000269" key="5">
    <source>
    </source>
</evidence>
<evidence type="ECO:0000269" key="6">
    <source>
    </source>
</evidence>
<evidence type="ECO:0000269" key="7">
    <source>
    </source>
</evidence>
<evidence type="ECO:0000269" key="8">
    <source>
    </source>
</evidence>
<evidence type="ECO:0000269" key="9">
    <source>
    </source>
</evidence>
<evidence type="ECO:0000305" key="10"/>
<evidence type="ECO:0007744" key="11">
    <source>
        <dbReference type="PDB" id="1NNS"/>
    </source>
</evidence>
<evidence type="ECO:0007744" key="12">
    <source>
        <dbReference type="PDB" id="3ECA"/>
    </source>
</evidence>
<evidence type="ECO:0007744" key="13">
    <source>
        <dbReference type="PDB" id="4ECA"/>
    </source>
</evidence>
<evidence type="ECO:0007829" key="14">
    <source>
        <dbReference type="PDB" id="5MQ5"/>
    </source>
</evidence>
<evidence type="ECO:0007829" key="15">
    <source>
        <dbReference type="PDB" id="6PAC"/>
    </source>
</evidence>
<evidence type="ECO:0007829" key="16">
    <source>
        <dbReference type="PDB" id="7M11"/>
    </source>
</evidence>
<evidence type="ECO:0007829" key="17">
    <source>
        <dbReference type="PDB" id="7R57"/>
    </source>
</evidence>
<reference key="1">
    <citation type="journal article" date="1990" name="J. Bacteriol.">
        <title>Analysis of the Escherichia coli gene encoding L-asparaginase II, ansB, and its regulation by cyclic AMP receptor and FNR proteins.</title>
        <authorList>
            <person name="Jennings M.P."/>
            <person name="Beacham I.R."/>
        </authorList>
    </citation>
    <scope>NUCLEOTIDE SEQUENCE [GENOMIC DNA]</scope>
</reference>
<reference key="2">
    <citation type="journal article" date="1990" name="Gene">
        <title>L-asparaginase II of Escherichia coli K-12: cloning, mapping and sequencing of the ansB gene.</title>
        <authorList>
            <person name="Bonthron D.T."/>
        </authorList>
    </citation>
    <scope>NUCLEOTIDE SEQUENCE [GENOMIC DNA]</scope>
    <source>
        <strain>K12</strain>
    </source>
</reference>
<reference key="3">
    <citation type="journal article" date="1997" name="Science">
        <title>The complete genome sequence of Escherichia coli K-12.</title>
        <authorList>
            <person name="Blattner F.R."/>
            <person name="Plunkett G. III"/>
            <person name="Bloch C.A."/>
            <person name="Perna N.T."/>
            <person name="Burland V."/>
            <person name="Riley M."/>
            <person name="Collado-Vides J."/>
            <person name="Glasner J.D."/>
            <person name="Rode C.K."/>
            <person name="Mayhew G.F."/>
            <person name="Gregor J."/>
            <person name="Davis N.W."/>
            <person name="Kirkpatrick H.A."/>
            <person name="Goeden M.A."/>
            <person name="Rose D.J."/>
            <person name="Mau B."/>
            <person name="Shao Y."/>
        </authorList>
    </citation>
    <scope>NUCLEOTIDE SEQUENCE [LARGE SCALE GENOMIC DNA]</scope>
    <source>
        <strain>K12 / MG1655 / ATCC 47076</strain>
    </source>
</reference>
<reference key="4">
    <citation type="journal article" date="2006" name="Mol. Syst. Biol.">
        <title>Highly accurate genome sequences of Escherichia coli K-12 strains MG1655 and W3110.</title>
        <authorList>
            <person name="Hayashi K."/>
            <person name="Morooka N."/>
            <person name="Yamamoto Y."/>
            <person name="Fujita K."/>
            <person name="Isono K."/>
            <person name="Choi S."/>
            <person name="Ohtsubo E."/>
            <person name="Baba T."/>
            <person name="Wanner B.L."/>
            <person name="Mori H."/>
            <person name="Horiuchi T."/>
        </authorList>
    </citation>
    <scope>NUCLEOTIDE SEQUENCE [LARGE SCALE GENOMIC DNA]</scope>
    <source>
        <strain>K12 / W3110 / ATCC 27325 / DSM 5911</strain>
    </source>
</reference>
<reference key="5">
    <citation type="journal article" date="1980" name="Hoppe-Seyler's Z. Physiol. Chem.">
        <title>The primary structure of L-asparaginase from Escherichia coli.</title>
        <authorList>
            <person name="Maita T."/>
            <person name="Matsuda G."/>
        </authorList>
    </citation>
    <scope>PROTEIN SEQUENCE OF 23-348</scope>
</reference>
<reference key="6">
    <citation type="journal article" date="1979" name="Hoppe-Seyler's Z. Physiol. Chem.">
        <title>Amino acid sequences of the tryptic peptides from carboxymethylated L-asparaginase from Escherichia coli.</title>
        <authorList>
            <person name="Maita T."/>
            <person name="Morokuma K."/>
            <person name="Matsuda G."/>
        </authorList>
    </citation>
    <scope>PARTIAL PROTEIN SEQUENCE</scope>
</reference>
<reference key="7">
    <citation type="journal article" date="1977" name="J. Biol. Chem.">
        <title>Structure of peptide from active site region of Escherichia coli L-asparaginase.</title>
        <authorList>
            <person name="Peterson R.G."/>
            <person name="Richards F.F."/>
            <person name="Handschumacher R.E."/>
        </authorList>
    </citation>
    <scope>ACTIVE SITE</scope>
</reference>
<reference key="8">
    <citation type="journal article" date="1972" name="Arch. Biochem. Biophys.">
        <title>Chemical evidence for identical subunits in L-asparaginase from Escherichia coli B.</title>
        <authorList>
            <person name="Greenquist A.C."/>
            <person name="Wriston J.C. Jr."/>
        </authorList>
    </citation>
    <scope>SUBUNIT</scope>
</reference>
<reference key="9">
    <citation type="journal article" date="1991" name="FEBS Lett.">
        <title>A catalytic role for threonine-12 of E. coli asparaginase II as established by site-directed mutagenesis.</title>
        <authorList>
            <person name="Harms E."/>
            <person name="Wehner A."/>
            <person name="Aung H.P."/>
            <person name="Roehm K.H."/>
        </authorList>
    </citation>
    <scope>ACTIVE SITE THR-34</scope>
    <scope>MUTAGENESIS OF THR-34</scope>
    <scope>SUBUNIT</scope>
</reference>
<reference key="10">
    <citation type="journal article" date="1992" name="Eur. J. Biochem.">
        <title>Site-specific mutagenesis of Escherichia coli asparaginase II. None of the three histidine residues is required for catalysis.</title>
        <authorList>
            <person name="Wehner A."/>
            <person name="Harms E."/>
            <person name="Jennings M.P."/>
            <person name="Beacham I.R."/>
            <person name="Derst C."/>
            <person name="Bast P."/>
            <person name="Roehm K.H."/>
        </authorList>
    </citation>
    <scope>MUTAGENESIS OF HISTIDINE RESIDUES</scope>
</reference>
<reference key="11">
    <citation type="journal article" date="1992" name="Protein Eng.">
        <title>Probing the role of threonine and serine residues of E. coli asparaginase II by site-specific mutagenesis.</title>
        <authorList>
            <person name="Ders C."/>
            <person name="Henseling J."/>
            <person name="Roehm K.H."/>
        </authorList>
    </citation>
    <scope>MUTAGENESIS OF THREONINE AND SERINE RESIDUES</scope>
</reference>
<reference evidence="12" key="12">
    <citation type="journal article" date="1993" name="Proc. Natl. Acad. Sci. U.S.A.">
        <title>Crystal structure of Escherichia coli L-asparaginase, an enzyme used in cancer therapy.</title>
        <authorList>
            <person name="Swain A.L."/>
            <person name="Jaskolski M."/>
            <person name="Housset D."/>
            <person name="Rao J.K.M."/>
            <person name="Wlodawer A."/>
        </authorList>
    </citation>
    <scope>X-RAY CRYSTALLOGRAPHY (2.4 ANGSTROMS) IN COMPLEX WITH ASPARTIC ACID</scope>
    <scope>DISULFIDE BOND</scope>
    <scope>SUBUNIT</scope>
</reference>
<reference evidence="13" key="13">
    <citation type="journal article" date="1996" name="FEBS Lett.">
        <title>A covalently bound catalytic intermediate in Escherichia coli asparaginase: crystal structure of a Thr-89-Val mutant.</title>
        <authorList>
            <person name="Palm G.J."/>
            <person name="Lubkowski J."/>
            <person name="Derst C."/>
            <person name="Schleper S."/>
            <person name="Roehm K.H."/>
            <person name="Wlodawer A."/>
        </authorList>
    </citation>
    <scope>X-RAY CRYSTALLOGRAPHY (2.2 ANGSTROMS) OF MUTANT VAL-111</scope>
    <scope>ACTIVE SITE</scope>
    <scope>MUTAGENESIS OF THR-111</scope>
    <scope>CATALYTIC ACTIVITY</scope>
    <scope>SUBUNIT</scope>
    <scope>DISULFIDE BOND</scope>
</reference>
<reference evidence="11" key="14">
    <citation type="journal article" date="2003" name="Acta Crystallogr. D">
        <title>Structural comparison of Escherichia coli L-asparaginase in two monoclinic space groups.</title>
        <authorList>
            <person name="Sanches M."/>
            <person name="Barbosa J.A."/>
            <person name="de Oliveira R.T."/>
            <person name="Abrahao Neto J."/>
            <person name="Polikarpov I."/>
        </authorList>
    </citation>
    <scope>X-RAY CRYSTALLOGRAPHY (1.95 ANGSTROMS) OF 23-348 IN COMPLEXES WITH ASPARTIC ACID</scope>
    <scope>SUBUNIT</scope>
</reference>